<keyword id="KW-0012">Acyltransferase</keyword>
<keyword id="KW-0963">Cytoplasm</keyword>
<keyword id="KW-1185">Reference proteome</keyword>
<keyword id="KW-0808">Transferase</keyword>
<proteinExistence type="inferred from homology"/>
<organism>
    <name type="scientific">Gloeobacter violaceus (strain ATCC 29082 / PCC 7421)</name>
    <dbReference type="NCBI Taxonomy" id="251221"/>
    <lineage>
        <taxon>Bacteria</taxon>
        <taxon>Bacillati</taxon>
        <taxon>Cyanobacteriota</taxon>
        <taxon>Cyanophyceae</taxon>
        <taxon>Gloeobacterales</taxon>
        <taxon>Gloeobacteraceae</taxon>
        <taxon>Gloeobacter</taxon>
    </lineage>
</organism>
<gene>
    <name evidence="1" type="primary">lipB</name>
    <name type="ordered locus">gll4414</name>
</gene>
<accession>Q7ND22</accession>
<sequence>MGRCLLIEPGLVPYLTAWEWQRQLMATRIAHRDRPDVLMLLEHPPVYTLGQGADAKHVLVDPASIELYRTERGGEVTYHGPGQLVGYPILDLTGYRQDLHWYLRTLEQVLIEVLADFGVQGEREAGFTGVWAGGRKIAALGIKVSRWVTMHGFALNVDPDLDAFARIVPCGLTRPVGSLVQLCPGVSVEQVQPVVACAFARVFGVQCEPGALEACLAVKPGC</sequence>
<name>LIPB_GLOVI</name>
<comment type="function">
    <text evidence="1">Catalyzes the transfer of endogenously produced octanoic acid from octanoyl-acyl-carrier-protein onto the lipoyl domains of lipoate-dependent enzymes. Lipoyl-ACP can also act as a substrate although octanoyl-ACP is likely to be the physiological substrate.</text>
</comment>
<comment type="catalytic activity">
    <reaction evidence="1">
        <text>octanoyl-[ACP] + L-lysyl-[protein] = N(6)-octanoyl-L-lysyl-[protein] + holo-[ACP] + H(+)</text>
        <dbReference type="Rhea" id="RHEA:17665"/>
        <dbReference type="Rhea" id="RHEA-COMP:9636"/>
        <dbReference type="Rhea" id="RHEA-COMP:9685"/>
        <dbReference type="Rhea" id="RHEA-COMP:9752"/>
        <dbReference type="Rhea" id="RHEA-COMP:9928"/>
        <dbReference type="ChEBI" id="CHEBI:15378"/>
        <dbReference type="ChEBI" id="CHEBI:29969"/>
        <dbReference type="ChEBI" id="CHEBI:64479"/>
        <dbReference type="ChEBI" id="CHEBI:78463"/>
        <dbReference type="ChEBI" id="CHEBI:78809"/>
        <dbReference type="EC" id="2.3.1.181"/>
    </reaction>
</comment>
<comment type="pathway">
    <text evidence="1">Protein modification; protein lipoylation via endogenous pathway; protein N(6)-(lipoyl)lysine from octanoyl-[acyl-carrier-protein]: step 1/2.</text>
</comment>
<comment type="subcellular location">
    <subcellularLocation>
        <location evidence="1">Cytoplasm</location>
    </subcellularLocation>
</comment>
<comment type="miscellaneous">
    <text evidence="1">In the reaction, the free carboxyl group of octanoic acid is attached via an amide linkage to the epsilon-amino group of a specific lysine residue of lipoyl domains of lipoate-dependent enzymes.</text>
</comment>
<comment type="similarity">
    <text evidence="1">Belongs to the LipB family.</text>
</comment>
<reference key="1">
    <citation type="journal article" date="2003" name="DNA Res.">
        <title>Complete genome structure of Gloeobacter violaceus PCC 7421, a cyanobacterium that lacks thylakoids.</title>
        <authorList>
            <person name="Nakamura Y."/>
            <person name="Kaneko T."/>
            <person name="Sato S."/>
            <person name="Mimuro M."/>
            <person name="Miyashita H."/>
            <person name="Tsuchiya T."/>
            <person name="Sasamoto S."/>
            <person name="Watanabe A."/>
            <person name="Kawashima K."/>
            <person name="Kishida Y."/>
            <person name="Kiyokawa C."/>
            <person name="Kohara M."/>
            <person name="Matsumoto M."/>
            <person name="Matsuno A."/>
            <person name="Nakazaki N."/>
            <person name="Shimpo S."/>
            <person name="Takeuchi C."/>
            <person name="Yamada M."/>
            <person name="Tabata S."/>
        </authorList>
    </citation>
    <scope>NUCLEOTIDE SEQUENCE [LARGE SCALE GENOMIC DNA]</scope>
    <source>
        <strain>ATCC 29082 / PCC 7421</strain>
    </source>
</reference>
<protein>
    <recommendedName>
        <fullName evidence="1">Octanoyltransferase</fullName>
        <ecNumber evidence="1">2.3.1.181</ecNumber>
    </recommendedName>
    <alternativeName>
        <fullName evidence="1">Lipoate-protein ligase B</fullName>
    </alternativeName>
    <alternativeName>
        <fullName evidence="1">Lipoyl/octanoyl transferase</fullName>
    </alternativeName>
    <alternativeName>
        <fullName evidence="1">Octanoyl-[acyl-carrier-protein]-protein N-octanoyltransferase</fullName>
    </alternativeName>
</protein>
<feature type="chain" id="PRO_0000062839" description="Octanoyltransferase">
    <location>
        <begin position="1"/>
        <end position="222"/>
    </location>
</feature>
<feature type="domain" description="BPL/LPL catalytic" evidence="2">
    <location>
        <begin position="32"/>
        <end position="207"/>
    </location>
</feature>
<feature type="active site" description="Acyl-thioester intermediate" evidence="1">
    <location>
        <position position="170"/>
    </location>
</feature>
<feature type="binding site" evidence="1">
    <location>
        <begin position="72"/>
        <end position="79"/>
    </location>
    <ligand>
        <name>substrate</name>
    </ligand>
</feature>
<feature type="binding site" evidence="1">
    <location>
        <begin position="139"/>
        <end position="141"/>
    </location>
    <ligand>
        <name>substrate</name>
    </ligand>
</feature>
<feature type="binding site" evidence="1">
    <location>
        <begin position="152"/>
        <end position="154"/>
    </location>
    <ligand>
        <name>substrate</name>
    </ligand>
</feature>
<feature type="site" description="Lowers pKa of active site Cys" evidence="1">
    <location>
        <position position="136"/>
    </location>
</feature>
<evidence type="ECO:0000255" key="1">
    <source>
        <dbReference type="HAMAP-Rule" id="MF_00013"/>
    </source>
</evidence>
<evidence type="ECO:0000255" key="2">
    <source>
        <dbReference type="PROSITE-ProRule" id="PRU01067"/>
    </source>
</evidence>
<dbReference type="EC" id="2.3.1.181" evidence="1"/>
<dbReference type="EMBL" id="BA000045">
    <property type="protein sequence ID" value="BAC92355.1"/>
    <property type="molecule type" value="Genomic_DNA"/>
</dbReference>
<dbReference type="RefSeq" id="NP_927360.1">
    <property type="nucleotide sequence ID" value="NC_005125.1"/>
</dbReference>
<dbReference type="RefSeq" id="WP_011144397.1">
    <property type="nucleotide sequence ID" value="NC_005125.1"/>
</dbReference>
<dbReference type="SMR" id="Q7ND22"/>
<dbReference type="FunCoup" id="Q7ND22">
    <property type="interactions" value="254"/>
</dbReference>
<dbReference type="STRING" id="251221.gene:10761933"/>
<dbReference type="EnsemblBacteria" id="BAC92355">
    <property type="protein sequence ID" value="BAC92355"/>
    <property type="gene ID" value="BAC92355"/>
</dbReference>
<dbReference type="KEGG" id="gvi:gll4414"/>
<dbReference type="PATRIC" id="fig|251221.4.peg.4444"/>
<dbReference type="eggNOG" id="COG0321">
    <property type="taxonomic scope" value="Bacteria"/>
</dbReference>
<dbReference type="HOGENOM" id="CLU_035168_1_0_3"/>
<dbReference type="InParanoid" id="Q7ND22"/>
<dbReference type="OrthoDB" id="9787061at2"/>
<dbReference type="PhylomeDB" id="Q7ND22"/>
<dbReference type="UniPathway" id="UPA00538">
    <property type="reaction ID" value="UER00592"/>
</dbReference>
<dbReference type="Proteomes" id="UP000000557">
    <property type="component" value="Chromosome"/>
</dbReference>
<dbReference type="GO" id="GO:0005737">
    <property type="term" value="C:cytoplasm"/>
    <property type="evidence" value="ECO:0007669"/>
    <property type="project" value="UniProtKB-SubCell"/>
</dbReference>
<dbReference type="GO" id="GO:0033819">
    <property type="term" value="F:lipoyl(octanoyl) transferase activity"/>
    <property type="evidence" value="ECO:0000318"/>
    <property type="project" value="GO_Central"/>
</dbReference>
<dbReference type="GO" id="GO:0036211">
    <property type="term" value="P:protein modification process"/>
    <property type="evidence" value="ECO:0007669"/>
    <property type="project" value="InterPro"/>
</dbReference>
<dbReference type="CDD" id="cd16444">
    <property type="entry name" value="LipB"/>
    <property type="match status" value="1"/>
</dbReference>
<dbReference type="FunFam" id="3.30.930.10:FF:000035">
    <property type="entry name" value="Putative lipoyltransferase 2, mitochondrial"/>
    <property type="match status" value="1"/>
</dbReference>
<dbReference type="Gene3D" id="3.30.930.10">
    <property type="entry name" value="Bira Bifunctional Protein, Domain 2"/>
    <property type="match status" value="1"/>
</dbReference>
<dbReference type="HAMAP" id="MF_00013">
    <property type="entry name" value="LipB"/>
    <property type="match status" value="1"/>
</dbReference>
<dbReference type="InterPro" id="IPR045864">
    <property type="entry name" value="aa-tRNA-synth_II/BPL/LPL"/>
</dbReference>
<dbReference type="InterPro" id="IPR004143">
    <property type="entry name" value="BPL_LPL_catalytic"/>
</dbReference>
<dbReference type="InterPro" id="IPR000544">
    <property type="entry name" value="Octanoyltransferase"/>
</dbReference>
<dbReference type="InterPro" id="IPR020605">
    <property type="entry name" value="Octanoyltransferase_CS"/>
</dbReference>
<dbReference type="NCBIfam" id="TIGR00214">
    <property type="entry name" value="lipB"/>
    <property type="match status" value="1"/>
</dbReference>
<dbReference type="NCBIfam" id="NF010925">
    <property type="entry name" value="PRK14345.1"/>
    <property type="match status" value="1"/>
</dbReference>
<dbReference type="PANTHER" id="PTHR10993:SF7">
    <property type="entry name" value="LIPOYLTRANSFERASE 2, MITOCHONDRIAL-RELATED"/>
    <property type="match status" value="1"/>
</dbReference>
<dbReference type="PANTHER" id="PTHR10993">
    <property type="entry name" value="OCTANOYLTRANSFERASE"/>
    <property type="match status" value="1"/>
</dbReference>
<dbReference type="Pfam" id="PF21948">
    <property type="entry name" value="LplA-B_cat"/>
    <property type="match status" value="1"/>
</dbReference>
<dbReference type="SUPFAM" id="SSF55681">
    <property type="entry name" value="Class II aaRS and biotin synthetases"/>
    <property type="match status" value="1"/>
</dbReference>
<dbReference type="PROSITE" id="PS51733">
    <property type="entry name" value="BPL_LPL_CATALYTIC"/>
    <property type="match status" value="1"/>
</dbReference>
<dbReference type="PROSITE" id="PS01313">
    <property type="entry name" value="LIPB"/>
    <property type="match status" value="1"/>
</dbReference>